<comment type="function">
    <text evidence="1">Catalyzes the conversion of acetate into acetyl-CoA (AcCoA), an essential intermediate at the junction of anabolic and catabolic pathways. AcsA undergoes a two-step reaction. In the first half reaction, AcsA combines acetate with ATP to form acetyl-adenylate (AcAMP) intermediate. In the second half reaction, it can then transfer the acetyl group from AcAMP to the sulfhydryl group of CoA, forming the product AcCoA.</text>
</comment>
<comment type="catalytic activity">
    <reaction evidence="1">
        <text>acetate + ATP + CoA = acetyl-CoA + AMP + diphosphate</text>
        <dbReference type="Rhea" id="RHEA:23176"/>
        <dbReference type="ChEBI" id="CHEBI:30089"/>
        <dbReference type="ChEBI" id="CHEBI:30616"/>
        <dbReference type="ChEBI" id="CHEBI:33019"/>
        <dbReference type="ChEBI" id="CHEBI:57287"/>
        <dbReference type="ChEBI" id="CHEBI:57288"/>
        <dbReference type="ChEBI" id="CHEBI:456215"/>
        <dbReference type="EC" id="6.2.1.1"/>
    </reaction>
</comment>
<comment type="cofactor">
    <cofactor evidence="1">
        <name>Mg(2+)</name>
        <dbReference type="ChEBI" id="CHEBI:18420"/>
    </cofactor>
</comment>
<comment type="PTM">
    <text evidence="1">Acetylated. Deacetylation by the SIR2-homolog deacetylase activates the enzyme.</text>
</comment>
<comment type="similarity">
    <text evidence="1">Belongs to the ATP-dependent AMP-binding enzyme family.</text>
</comment>
<proteinExistence type="inferred from homology"/>
<feature type="chain" id="PRO_1000137266" description="Acetyl-coenzyme A synthetase">
    <location>
        <begin position="1"/>
        <end position="652"/>
    </location>
</feature>
<feature type="binding site" evidence="1">
    <location>
        <begin position="191"/>
        <end position="194"/>
    </location>
    <ligand>
        <name>CoA</name>
        <dbReference type="ChEBI" id="CHEBI:57287"/>
    </ligand>
</feature>
<feature type="binding site" evidence="1">
    <location>
        <position position="311"/>
    </location>
    <ligand>
        <name>CoA</name>
        <dbReference type="ChEBI" id="CHEBI:57287"/>
    </ligand>
</feature>
<feature type="binding site" evidence="1">
    <location>
        <begin position="387"/>
        <end position="389"/>
    </location>
    <ligand>
        <name>ATP</name>
        <dbReference type="ChEBI" id="CHEBI:30616"/>
    </ligand>
</feature>
<feature type="binding site" evidence="1">
    <location>
        <begin position="411"/>
        <end position="416"/>
    </location>
    <ligand>
        <name>ATP</name>
        <dbReference type="ChEBI" id="CHEBI:30616"/>
    </ligand>
</feature>
<feature type="binding site" evidence="1">
    <location>
        <position position="503"/>
    </location>
    <ligand>
        <name>ATP</name>
        <dbReference type="ChEBI" id="CHEBI:30616"/>
    </ligand>
</feature>
<feature type="binding site" evidence="1">
    <location>
        <position position="518"/>
    </location>
    <ligand>
        <name>ATP</name>
        <dbReference type="ChEBI" id="CHEBI:30616"/>
    </ligand>
</feature>
<feature type="binding site" evidence="1">
    <location>
        <position position="526"/>
    </location>
    <ligand>
        <name>CoA</name>
        <dbReference type="ChEBI" id="CHEBI:57287"/>
    </ligand>
</feature>
<feature type="binding site" evidence="1">
    <location>
        <position position="529"/>
    </location>
    <ligand>
        <name>ATP</name>
        <dbReference type="ChEBI" id="CHEBI:30616"/>
    </ligand>
</feature>
<feature type="binding site" evidence="1">
    <location>
        <position position="540"/>
    </location>
    <ligand>
        <name>Mg(2+)</name>
        <dbReference type="ChEBI" id="CHEBI:18420"/>
    </ligand>
</feature>
<feature type="binding site" evidence="1">
    <location>
        <position position="542"/>
    </location>
    <ligand>
        <name>Mg(2+)</name>
        <dbReference type="ChEBI" id="CHEBI:18420"/>
    </ligand>
</feature>
<feature type="binding site" evidence="1">
    <location>
        <position position="545"/>
    </location>
    <ligand>
        <name>Mg(2+)</name>
        <dbReference type="ChEBI" id="CHEBI:18420"/>
    </ligand>
</feature>
<feature type="binding site" evidence="1">
    <location>
        <position position="587"/>
    </location>
    <ligand>
        <name>CoA</name>
        <dbReference type="ChEBI" id="CHEBI:57287"/>
    </ligand>
</feature>
<feature type="modified residue" description="N6-acetyllysine" evidence="1">
    <location>
        <position position="613"/>
    </location>
</feature>
<name>ACSA_MARMS</name>
<keyword id="KW-0007">Acetylation</keyword>
<keyword id="KW-0067">ATP-binding</keyword>
<keyword id="KW-0436">Ligase</keyword>
<keyword id="KW-0460">Magnesium</keyword>
<keyword id="KW-0479">Metal-binding</keyword>
<keyword id="KW-0547">Nucleotide-binding</keyword>
<reference key="1">
    <citation type="submission" date="2007-06" db="EMBL/GenBank/DDBJ databases">
        <title>Complete sequence of Marinomonas sp. MWYL1.</title>
        <authorList>
            <consortium name="US DOE Joint Genome Institute"/>
            <person name="Copeland A."/>
            <person name="Lucas S."/>
            <person name="Lapidus A."/>
            <person name="Barry K."/>
            <person name="Glavina del Rio T."/>
            <person name="Dalin E."/>
            <person name="Tice H."/>
            <person name="Pitluck S."/>
            <person name="Kiss H."/>
            <person name="Brettin T."/>
            <person name="Bruce D."/>
            <person name="Detter J.C."/>
            <person name="Han C."/>
            <person name="Schmutz J."/>
            <person name="Larimer F."/>
            <person name="Land M."/>
            <person name="Hauser L."/>
            <person name="Kyrpides N."/>
            <person name="Kim E."/>
            <person name="Johnston A.W.B."/>
            <person name="Todd J.D."/>
            <person name="Rogers R."/>
            <person name="Wexler M."/>
            <person name="Bond P.L."/>
            <person name="Li Y."/>
            <person name="Richardson P."/>
        </authorList>
    </citation>
    <scope>NUCLEOTIDE SEQUENCE [LARGE SCALE GENOMIC DNA]</scope>
    <source>
        <strain>MWYL1</strain>
    </source>
</reference>
<sequence>MKSLYSATSNEAAKNANVSQAEFEKRYQESIENPDEFWGREGKRIDWFKPYTKVKNTSFKRGEVSIKWFEDGELNVAYNCIDRHLAKSANKVAYYCEGDKESDEKVAITYQTLHDEVGRLANLLKRQGVKKGDRVAIYMPMIPQAVYAMLACARIGAIHSVIFGGFSAHAIADRLNDCEVKLVITADEGRRAGNTIPLKHNVDMALDNNACPTVENVIVYRYTEKDVPWFEGRDLDWAVEVENESTECPAERMNAEDPLFILYTSGSTGKPKGVVHTTGGYLVYASLTHELVFDLKPDDVYWCAADVGWITGHSYMVYGPLANGTTSILFEGVPTYPDSGRIGRVVDKFDVTILYTAPTAIRALMAKGDEATRSSKRDSLRVLGSVGEPINPEAWSWYYSEIGNSSCPIVDTWWQTETGGMMMTPRIVQGDVKPGSCTGPLYGVQPALVDAQGVLQEEQGVLVEGGLVITDSWPGQARTVYGDHERFEQTYFSTFDGMYFTGDGASRDADGHYWITGRMDDVLNVSGHRLGTAEIESALVAHPSVAEAAIVGFPHDIKGQGIYVYVSAIAGVIPDEELTKSLKLFVRQEIGPIATPDLIQWTSKGLPKTRSGKIMRRILRKIAANEHDQLGDTSTLADPSVVDDLIENRLNV</sequence>
<organism>
    <name type="scientific">Marinomonas sp. (strain MWYL1)</name>
    <dbReference type="NCBI Taxonomy" id="400668"/>
    <lineage>
        <taxon>Bacteria</taxon>
        <taxon>Pseudomonadati</taxon>
        <taxon>Pseudomonadota</taxon>
        <taxon>Gammaproteobacteria</taxon>
        <taxon>Oceanospirillales</taxon>
        <taxon>Oceanospirillaceae</taxon>
        <taxon>Marinomonas</taxon>
    </lineage>
</organism>
<gene>
    <name evidence="1" type="primary">acsA</name>
    <name type="ordered locus">Mmwyl1_3006</name>
</gene>
<dbReference type="EC" id="6.2.1.1" evidence="1"/>
<dbReference type="EMBL" id="CP000749">
    <property type="protein sequence ID" value="ABR71917.1"/>
    <property type="molecule type" value="Genomic_DNA"/>
</dbReference>
<dbReference type="SMR" id="A6VZN8"/>
<dbReference type="STRING" id="400668.Mmwyl1_3006"/>
<dbReference type="KEGG" id="mmw:Mmwyl1_3006"/>
<dbReference type="eggNOG" id="COG0365">
    <property type="taxonomic scope" value="Bacteria"/>
</dbReference>
<dbReference type="HOGENOM" id="CLU_000022_3_6_6"/>
<dbReference type="OrthoDB" id="9803968at2"/>
<dbReference type="GO" id="GO:0005829">
    <property type="term" value="C:cytosol"/>
    <property type="evidence" value="ECO:0007669"/>
    <property type="project" value="TreeGrafter"/>
</dbReference>
<dbReference type="GO" id="GO:0003987">
    <property type="term" value="F:acetate-CoA ligase activity"/>
    <property type="evidence" value="ECO:0007669"/>
    <property type="project" value="UniProtKB-UniRule"/>
</dbReference>
<dbReference type="GO" id="GO:0016208">
    <property type="term" value="F:AMP binding"/>
    <property type="evidence" value="ECO:0007669"/>
    <property type="project" value="InterPro"/>
</dbReference>
<dbReference type="GO" id="GO:0005524">
    <property type="term" value="F:ATP binding"/>
    <property type="evidence" value="ECO:0007669"/>
    <property type="project" value="UniProtKB-KW"/>
</dbReference>
<dbReference type="GO" id="GO:0046872">
    <property type="term" value="F:metal ion binding"/>
    <property type="evidence" value="ECO:0007669"/>
    <property type="project" value="UniProtKB-KW"/>
</dbReference>
<dbReference type="GO" id="GO:0019427">
    <property type="term" value="P:acetyl-CoA biosynthetic process from acetate"/>
    <property type="evidence" value="ECO:0007669"/>
    <property type="project" value="InterPro"/>
</dbReference>
<dbReference type="CDD" id="cd05966">
    <property type="entry name" value="ACS"/>
    <property type="match status" value="1"/>
</dbReference>
<dbReference type="FunFam" id="3.30.300.30:FF:000004">
    <property type="entry name" value="Acetyl-coenzyme A synthetase"/>
    <property type="match status" value="1"/>
</dbReference>
<dbReference type="FunFam" id="3.40.50.12780:FF:000001">
    <property type="entry name" value="Acetyl-coenzyme A synthetase"/>
    <property type="match status" value="1"/>
</dbReference>
<dbReference type="Gene3D" id="3.30.300.30">
    <property type="match status" value="1"/>
</dbReference>
<dbReference type="Gene3D" id="3.40.50.12780">
    <property type="entry name" value="N-terminal domain of ligase-like"/>
    <property type="match status" value="1"/>
</dbReference>
<dbReference type="HAMAP" id="MF_01123">
    <property type="entry name" value="Ac_CoA_synth"/>
    <property type="match status" value="1"/>
</dbReference>
<dbReference type="InterPro" id="IPR011904">
    <property type="entry name" value="Ac_CoA_lig"/>
</dbReference>
<dbReference type="InterPro" id="IPR032387">
    <property type="entry name" value="ACAS_N"/>
</dbReference>
<dbReference type="InterPro" id="IPR025110">
    <property type="entry name" value="AMP-bd_C"/>
</dbReference>
<dbReference type="InterPro" id="IPR045851">
    <property type="entry name" value="AMP-bd_C_sf"/>
</dbReference>
<dbReference type="InterPro" id="IPR020845">
    <property type="entry name" value="AMP-binding_CS"/>
</dbReference>
<dbReference type="InterPro" id="IPR000873">
    <property type="entry name" value="AMP-dep_synth/lig_dom"/>
</dbReference>
<dbReference type="InterPro" id="IPR042099">
    <property type="entry name" value="ANL_N_sf"/>
</dbReference>
<dbReference type="NCBIfam" id="TIGR02188">
    <property type="entry name" value="Ac_CoA_lig_AcsA"/>
    <property type="match status" value="1"/>
</dbReference>
<dbReference type="NCBIfam" id="NF001208">
    <property type="entry name" value="PRK00174.1"/>
    <property type="match status" value="1"/>
</dbReference>
<dbReference type="PANTHER" id="PTHR24095">
    <property type="entry name" value="ACETYL-COENZYME A SYNTHETASE"/>
    <property type="match status" value="1"/>
</dbReference>
<dbReference type="PANTHER" id="PTHR24095:SF243">
    <property type="entry name" value="ACETYL-COENZYME A SYNTHETASE"/>
    <property type="match status" value="1"/>
</dbReference>
<dbReference type="Pfam" id="PF16177">
    <property type="entry name" value="ACAS_N"/>
    <property type="match status" value="1"/>
</dbReference>
<dbReference type="Pfam" id="PF00501">
    <property type="entry name" value="AMP-binding"/>
    <property type="match status" value="1"/>
</dbReference>
<dbReference type="Pfam" id="PF13193">
    <property type="entry name" value="AMP-binding_C"/>
    <property type="match status" value="1"/>
</dbReference>
<dbReference type="SUPFAM" id="SSF56801">
    <property type="entry name" value="Acetyl-CoA synthetase-like"/>
    <property type="match status" value="1"/>
</dbReference>
<dbReference type="PROSITE" id="PS00455">
    <property type="entry name" value="AMP_BINDING"/>
    <property type="match status" value="1"/>
</dbReference>
<accession>A6VZN8</accession>
<protein>
    <recommendedName>
        <fullName evidence="1">Acetyl-coenzyme A synthetase</fullName>
        <shortName evidence="1">AcCoA synthetase</shortName>
        <shortName evidence="1">Acs</shortName>
        <ecNumber evidence="1">6.2.1.1</ecNumber>
    </recommendedName>
    <alternativeName>
        <fullName evidence="1">Acetate--CoA ligase</fullName>
    </alternativeName>
    <alternativeName>
        <fullName evidence="1">Acyl-activating enzyme</fullName>
    </alternativeName>
</protein>
<evidence type="ECO:0000255" key="1">
    <source>
        <dbReference type="HAMAP-Rule" id="MF_01123"/>
    </source>
</evidence>